<accession>Q8EIQ6</accession>
<comment type="function">
    <text evidence="1">The glycine cleavage system catalyzes the degradation of glycine. The P protein binds the alpha-amino group of glycine through its pyridoxal phosphate cofactor; CO(2) is released and the remaining methylamine moiety is then transferred to the lipoamide cofactor of the H protein.</text>
</comment>
<comment type="catalytic activity">
    <reaction evidence="1">
        <text>N(6)-[(R)-lipoyl]-L-lysyl-[glycine-cleavage complex H protein] + glycine + H(+) = N(6)-[(R)-S(8)-aminomethyldihydrolipoyl]-L-lysyl-[glycine-cleavage complex H protein] + CO2</text>
        <dbReference type="Rhea" id="RHEA:24304"/>
        <dbReference type="Rhea" id="RHEA-COMP:10494"/>
        <dbReference type="Rhea" id="RHEA-COMP:10495"/>
        <dbReference type="ChEBI" id="CHEBI:15378"/>
        <dbReference type="ChEBI" id="CHEBI:16526"/>
        <dbReference type="ChEBI" id="CHEBI:57305"/>
        <dbReference type="ChEBI" id="CHEBI:83099"/>
        <dbReference type="ChEBI" id="CHEBI:83143"/>
        <dbReference type="EC" id="1.4.4.2"/>
    </reaction>
</comment>
<comment type="cofactor">
    <cofactor evidence="1">
        <name>pyridoxal 5'-phosphate</name>
        <dbReference type="ChEBI" id="CHEBI:597326"/>
    </cofactor>
</comment>
<comment type="subunit">
    <text evidence="1">The glycine cleavage system is composed of four proteins: P, T, L and H.</text>
</comment>
<comment type="similarity">
    <text evidence="1">Belongs to the GcvP family.</text>
</comment>
<name>GCSP_SHEON</name>
<proteinExistence type="inferred from homology"/>
<organism>
    <name type="scientific">Shewanella oneidensis (strain ATCC 700550 / JCM 31522 / CIP 106686 / LMG 19005 / NCIMB 14063 / MR-1)</name>
    <dbReference type="NCBI Taxonomy" id="211586"/>
    <lineage>
        <taxon>Bacteria</taxon>
        <taxon>Pseudomonadati</taxon>
        <taxon>Pseudomonadota</taxon>
        <taxon>Gammaproteobacteria</taxon>
        <taxon>Alteromonadales</taxon>
        <taxon>Shewanellaceae</taxon>
        <taxon>Shewanella</taxon>
    </lineage>
</organism>
<dbReference type="EC" id="1.4.4.2" evidence="1"/>
<dbReference type="EMBL" id="AE014299">
    <property type="protein sequence ID" value="AAN53857.1"/>
    <property type="molecule type" value="Genomic_DNA"/>
</dbReference>
<dbReference type="RefSeq" id="NP_716412.1">
    <property type="nucleotide sequence ID" value="NC_004347.2"/>
</dbReference>
<dbReference type="RefSeq" id="WP_011071084.1">
    <property type="nucleotide sequence ID" value="NC_004347.2"/>
</dbReference>
<dbReference type="SMR" id="Q8EIQ6"/>
<dbReference type="STRING" id="211586.SO_0781"/>
<dbReference type="PaxDb" id="211586-SO_0781"/>
<dbReference type="KEGG" id="son:SO_0781"/>
<dbReference type="PATRIC" id="fig|211586.12.peg.751"/>
<dbReference type="eggNOG" id="COG0403">
    <property type="taxonomic scope" value="Bacteria"/>
</dbReference>
<dbReference type="eggNOG" id="COG1003">
    <property type="taxonomic scope" value="Bacteria"/>
</dbReference>
<dbReference type="HOGENOM" id="CLU_004620_1_1_6"/>
<dbReference type="OrthoDB" id="9801272at2"/>
<dbReference type="PhylomeDB" id="Q8EIQ6"/>
<dbReference type="BioCyc" id="SONE211586:G1GMP-733-MONOMER"/>
<dbReference type="Proteomes" id="UP000008186">
    <property type="component" value="Chromosome"/>
</dbReference>
<dbReference type="GO" id="GO:0005829">
    <property type="term" value="C:cytosol"/>
    <property type="evidence" value="ECO:0000318"/>
    <property type="project" value="GO_Central"/>
</dbReference>
<dbReference type="GO" id="GO:0005960">
    <property type="term" value="C:glycine cleavage complex"/>
    <property type="evidence" value="ECO:0000318"/>
    <property type="project" value="GO_Central"/>
</dbReference>
<dbReference type="GO" id="GO:0016594">
    <property type="term" value="F:glycine binding"/>
    <property type="evidence" value="ECO:0000318"/>
    <property type="project" value="GO_Central"/>
</dbReference>
<dbReference type="GO" id="GO:0004375">
    <property type="term" value="F:glycine dehydrogenase (decarboxylating) activity"/>
    <property type="evidence" value="ECO:0000318"/>
    <property type="project" value="GO_Central"/>
</dbReference>
<dbReference type="GO" id="GO:0030170">
    <property type="term" value="F:pyridoxal phosphate binding"/>
    <property type="evidence" value="ECO:0000318"/>
    <property type="project" value="GO_Central"/>
</dbReference>
<dbReference type="GO" id="GO:0019464">
    <property type="term" value="P:glycine decarboxylation via glycine cleavage system"/>
    <property type="evidence" value="ECO:0000318"/>
    <property type="project" value="GO_Central"/>
</dbReference>
<dbReference type="CDD" id="cd00613">
    <property type="entry name" value="GDC-P"/>
    <property type="match status" value="2"/>
</dbReference>
<dbReference type="FunFam" id="3.40.640.10:FF:000005">
    <property type="entry name" value="Glycine dehydrogenase (decarboxylating), mitochondrial"/>
    <property type="match status" value="1"/>
</dbReference>
<dbReference type="FunFam" id="3.90.1150.10:FF:000007">
    <property type="entry name" value="Glycine dehydrogenase (decarboxylating), mitochondrial"/>
    <property type="match status" value="1"/>
</dbReference>
<dbReference type="FunFam" id="3.40.640.10:FF:000007">
    <property type="entry name" value="glycine dehydrogenase (Decarboxylating), mitochondrial"/>
    <property type="match status" value="1"/>
</dbReference>
<dbReference type="Gene3D" id="3.90.1150.10">
    <property type="entry name" value="Aspartate Aminotransferase, domain 1"/>
    <property type="match status" value="2"/>
</dbReference>
<dbReference type="Gene3D" id="3.40.640.10">
    <property type="entry name" value="Type I PLP-dependent aspartate aminotransferase-like (Major domain)"/>
    <property type="match status" value="2"/>
</dbReference>
<dbReference type="HAMAP" id="MF_00711">
    <property type="entry name" value="GcvP"/>
    <property type="match status" value="1"/>
</dbReference>
<dbReference type="InterPro" id="IPR003437">
    <property type="entry name" value="GcvP"/>
</dbReference>
<dbReference type="InterPro" id="IPR049316">
    <property type="entry name" value="GDC-P_C"/>
</dbReference>
<dbReference type="InterPro" id="IPR049315">
    <property type="entry name" value="GDC-P_N"/>
</dbReference>
<dbReference type="InterPro" id="IPR020581">
    <property type="entry name" value="GDC_P"/>
</dbReference>
<dbReference type="InterPro" id="IPR015424">
    <property type="entry name" value="PyrdxlP-dep_Trfase"/>
</dbReference>
<dbReference type="InterPro" id="IPR015421">
    <property type="entry name" value="PyrdxlP-dep_Trfase_major"/>
</dbReference>
<dbReference type="InterPro" id="IPR015422">
    <property type="entry name" value="PyrdxlP-dep_Trfase_small"/>
</dbReference>
<dbReference type="NCBIfam" id="TIGR00461">
    <property type="entry name" value="gcvP"/>
    <property type="match status" value="1"/>
</dbReference>
<dbReference type="NCBIfam" id="NF003346">
    <property type="entry name" value="PRK04366.1"/>
    <property type="match status" value="1"/>
</dbReference>
<dbReference type="PANTHER" id="PTHR11773:SF13">
    <property type="entry name" value="GLYCINE DEHYDROGENASE (DECARBOXYLATING)"/>
    <property type="match status" value="1"/>
</dbReference>
<dbReference type="PANTHER" id="PTHR11773">
    <property type="entry name" value="GLYCINE DEHYDROGENASE, DECARBOXYLATING"/>
    <property type="match status" value="1"/>
</dbReference>
<dbReference type="Pfam" id="PF21478">
    <property type="entry name" value="GcvP2_C"/>
    <property type="match status" value="1"/>
</dbReference>
<dbReference type="Pfam" id="PF02347">
    <property type="entry name" value="GDC-P"/>
    <property type="match status" value="2"/>
</dbReference>
<dbReference type="SUPFAM" id="SSF53383">
    <property type="entry name" value="PLP-dependent transferases"/>
    <property type="match status" value="2"/>
</dbReference>
<gene>
    <name evidence="1" type="primary">gcvP</name>
    <name type="ordered locus">SO_0781</name>
</gene>
<reference key="1">
    <citation type="journal article" date="2002" name="Nat. Biotechnol.">
        <title>Genome sequence of the dissimilatory metal ion-reducing bacterium Shewanella oneidensis.</title>
        <authorList>
            <person name="Heidelberg J.F."/>
            <person name="Paulsen I.T."/>
            <person name="Nelson K.E."/>
            <person name="Gaidos E.J."/>
            <person name="Nelson W.C."/>
            <person name="Read T.D."/>
            <person name="Eisen J.A."/>
            <person name="Seshadri R."/>
            <person name="Ward N.L."/>
            <person name="Methe B.A."/>
            <person name="Clayton R.A."/>
            <person name="Meyer T."/>
            <person name="Tsapin A."/>
            <person name="Scott J."/>
            <person name="Beanan M.J."/>
            <person name="Brinkac L.M."/>
            <person name="Daugherty S.C."/>
            <person name="DeBoy R.T."/>
            <person name="Dodson R.J."/>
            <person name="Durkin A.S."/>
            <person name="Haft D.H."/>
            <person name="Kolonay J.F."/>
            <person name="Madupu R."/>
            <person name="Peterson J.D."/>
            <person name="Umayam L.A."/>
            <person name="White O."/>
            <person name="Wolf A.M."/>
            <person name="Vamathevan J.J."/>
            <person name="Weidman J.F."/>
            <person name="Impraim M."/>
            <person name="Lee K."/>
            <person name="Berry K.J."/>
            <person name="Lee C."/>
            <person name="Mueller J."/>
            <person name="Khouri H.M."/>
            <person name="Gill J."/>
            <person name="Utterback T.R."/>
            <person name="McDonald L.A."/>
            <person name="Feldblyum T.V."/>
            <person name="Smith H.O."/>
            <person name="Venter J.C."/>
            <person name="Nealson K.H."/>
            <person name="Fraser C.M."/>
        </authorList>
    </citation>
    <scope>NUCLEOTIDE SEQUENCE [LARGE SCALE GENOMIC DNA]</scope>
    <source>
        <strain>ATCC 700550 / JCM 31522 / CIP 106686 / LMG 19005 / NCIMB 14063 / MR-1</strain>
    </source>
</reference>
<evidence type="ECO:0000255" key="1">
    <source>
        <dbReference type="HAMAP-Rule" id="MF_00711"/>
    </source>
</evidence>
<sequence length="962" mass="104673">MTKQTLTQLEQHDLFLRRHIGPDSSQQQEMLNYVGAESLDDLTAQIVPESIRLSQELSIGDSCGEAEGIAYIRGLAKQNQVFKSYIGMGYYGTQVPNVILRNVLENPGWYTAYTPYQPEIAQGRLEAILNFQQVSMDLTGLDLASASLLDEATAAAEAMALAKRVSKAKKANIFFVADDVFPQTLDVVKTRAECFGFEVVVGPASEAVNHELFGALFQYSNRFGQITDFTDLFAELRAKNVIVTVAADIMSLVLLKSPGSMGADVVFGSAQRFGVPMGFGGPHAAFFVARDEHKRSMPGRIIGVSKDTRGNRALRMAMQTREQHIRREKANSNICTAQILLANMASFYAVFHGPQGLKTIASRINRFADILAAGLQAKGVSLVNNTWFDTISIKGLDVAAVNARALAAEMNLRFDADGIVGVSLDETTIRTDIDALFEVILGAGHGLDVAALDAQIVAQGSQSIPASLVREDAILSHPTFNRYQSETEMMRYIKRLESKDLALNYSMISLGSCTMKLNAAVEMIPVSWPEFANMHPFCPLDQAKGYTQLIEELSSWLVNVTGYDAVCIQPNSGAQGEYAGLLAIRKYHESRGEAHRNICLIPQSAHGTNPASAQLAGMQVVVTACDKQGNVDLEDLKAKAAEVAENLSCIMITYPSTHGVYEETVREICNIVHQHGGQVYLDGANMNAQVGLTSPGFIGADVSHLNLHKTFAIPHGGGGPGMGPIGVKAHLAPFVAGHVVVKPGRESDNNGAVSAAPYGSAGILPISWMYIKLLGSKGLKKSTQTALLNANYVMKKLSEHYPVLFRGRNDRVAHECIIDLRPIKEASGVTEMDIAKRLNDYGFHAPTMSFPVAGTLMIEPTESESKVELDRFIDAMVSIRAEIAKVEAGEWPADNNPLHNAPHTMADIMDSAFDSRPYSREVAVFPSAAVRTNKFWPTVNRIDDVYGDRNLFCACVPLSDYE</sequence>
<protein>
    <recommendedName>
        <fullName evidence="1">Glycine dehydrogenase (decarboxylating)</fullName>
        <ecNumber evidence="1">1.4.4.2</ecNumber>
    </recommendedName>
    <alternativeName>
        <fullName evidence="1">Glycine cleavage system P-protein</fullName>
    </alternativeName>
    <alternativeName>
        <fullName evidence="1">Glycine decarboxylase</fullName>
    </alternativeName>
    <alternativeName>
        <fullName evidence="1">Glycine dehydrogenase (aminomethyl-transferring)</fullName>
    </alternativeName>
</protein>
<keyword id="KW-0560">Oxidoreductase</keyword>
<keyword id="KW-0663">Pyridoxal phosphate</keyword>
<keyword id="KW-1185">Reference proteome</keyword>
<feature type="chain" id="PRO_0000166936" description="Glycine dehydrogenase (decarboxylating)">
    <location>
        <begin position="1"/>
        <end position="962"/>
    </location>
</feature>
<feature type="modified residue" description="N6-(pyridoxal phosphate)lysine" evidence="1">
    <location>
        <position position="709"/>
    </location>
</feature>